<proteinExistence type="inferred from homology"/>
<keyword id="KW-0963">Cytoplasm</keyword>
<keyword id="KW-0269">Exonuclease</keyword>
<keyword id="KW-0378">Hydrolase</keyword>
<keyword id="KW-0540">Nuclease</keyword>
<evidence type="ECO:0000255" key="1">
    <source>
        <dbReference type="HAMAP-Rule" id="MF_00045"/>
    </source>
</evidence>
<name>ORN_PSE14</name>
<sequence>MQNKQNLIWIDLEMTGLDPDTDVIIEMATIITDSELNTLAEGPVIAVHQSDETLAKMDEWNTRQHGGSGLTQRVRESTISMAEAEAQTLEFIKLWVPERSSPICGNSICQDRRFLYRHMPTLENWFHYRNLDVSTLKELAARWSPELKFKKGSTHLALDDIRESIAELRFYREHFIKP</sequence>
<accession>Q48P10</accession>
<dbReference type="EC" id="3.1.15.-" evidence="1"/>
<dbReference type="EMBL" id="CP000058">
    <property type="protein sequence ID" value="AAZ33057.1"/>
    <property type="molecule type" value="Genomic_DNA"/>
</dbReference>
<dbReference type="RefSeq" id="WP_002551812.1">
    <property type="nucleotide sequence ID" value="NC_005773.3"/>
</dbReference>
<dbReference type="SMR" id="Q48P10"/>
<dbReference type="KEGG" id="psp:PSPPH_0557"/>
<dbReference type="eggNOG" id="COG1949">
    <property type="taxonomic scope" value="Bacteria"/>
</dbReference>
<dbReference type="HOGENOM" id="CLU_064761_2_0_6"/>
<dbReference type="Proteomes" id="UP000000551">
    <property type="component" value="Chromosome"/>
</dbReference>
<dbReference type="GO" id="GO:0005737">
    <property type="term" value="C:cytoplasm"/>
    <property type="evidence" value="ECO:0007669"/>
    <property type="project" value="UniProtKB-SubCell"/>
</dbReference>
<dbReference type="GO" id="GO:0000175">
    <property type="term" value="F:3'-5'-RNA exonuclease activity"/>
    <property type="evidence" value="ECO:0007669"/>
    <property type="project" value="InterPro"/>
</dbReference>
<dbReference type="GO" id="GO:0003676">
    <property type="term" value="F:nucleic acid binding"/>
    <property type="evidence" value="ECO:0007669"/>
    <property type="project" value="InterPro"/>
</dbReference>
<dbReference type="GO" id="GO:0006259">
    <property type="term" value="P:DNA metabolic process"/>
    <property type="evidence" value="ECO:0007669"/>
    <property type="project" value="UniProtKB-ARBA"/>
</dbReference>
<dbReference type="CDD" id="cd06135">
    <property type="entry name" value="Orn"/>
    <property type="match status" value="1"/>
</dbReference>
<dbReference type="FunFam" id="3.30.420.10:FF:000003">
    <property type="entry name" value="Oligoribonuclease"/>
    <property type="match status" value="1"/>
</dbReference>
<dbReference type="Gene3D" id="3.30.420.10">
    <property type="entry name" value="Ribonuclease H-like superfamily/Ribonuclease H"/>
    <property type="match status" value="1"/>
</dbReference>
<dbReference type="HAMAP" id="MF_00045">
    <property type="entry name" value="Oligoribonuclease"/>
    <property type="match status" value="1"/>
</dbReference>
<dbReference type="InterPro" id="IPR013520">
    <property type="entry name" value="Exonuclease_RNaseT/DNA_pol3"/>
</dbReference>
<dbReference type="InterPro" id="IPR022894">
    <property type="entry name" value="Oligoribonuclease"/>
</dbReference>
<dbReference type="InterPro" id="IPR012337">
    <property type="entry name" value="RNaseH-like_sf"/>
</dbReference>
<dbReference type="InterPro" id="IPR036397">
    <property type="entry name" value="RNaseH_sf"/>
</dbReference>
<dbReference type="NCBIfam" id="NF003765">
    <property type="entry name" value="PRK05359.1"/>
    <property type="match status" value="1"/>
</dbReference>
<dbReference type="PANTHER" id="PTHR11046">
    <property type="entry name" value="OLIGORIBONUCLEASE, MITOCHONDRIAL"/>
    <property type="match status" value="1"/>
</dbReference>
<dbReference type="PANTHER" id="PTHR11046:SF0">
    <property type="entry name" value="OLIGORIBONUCLEASE, MITOCHONDRIAL"/>
    <property type="match status" value="1"/>
</dbReference>
<dbReference type="Pfam" id="PF00929">
    <property type="entry name" value="RNase_T"/>
    <property type="match status" value="1"/>
</dbReference>
<dbReference type="SMART" id="SM00479">
    <property type="entry name" value="EXOIII"/>
    <property type="match status" value="1"/>
</dbReference>
<dbReference type="SUPFAM" id="SSF53098">
    <property type="entry name" value="Ribonuclease H-like"/>
    <property type="match status" value="1"/>
</dbReference>
<feature type="chain" id="PRO_1000004269" description="Oligoribonuclease">
    <location>
        <begin position="1"/>
        <end position="178"/>
    </location>
</feature>
<feature type="domain" description="Exonuclease" evidence="1">
    <location>
        <begin position="7"/>
        <end position="168"/>
    </location>
</feature>
<feature type="active site" evidence="1">
    <location>
        <position position="128"/>
    </location>
</feature>
<reference key="1">
    <citation type="journal article" date="2005" name="J. Bacteriol.">
        <title>Whole-genome sequence analysis of Pseudomonas syringae pv. phaseolicola 1448A reveals divergence among pathovars in genes involved in virulence and transposition.</title>
        <authorList>
            <person name="Joardar V."/>
            <person name="Lindeberg M."/>
            <person name="Jackson R.W."/>
            <person name="Selengut J."/>
            <person name="Dodson R."/>
            <person name="Brinkac L.M."/>
            <person name="Daugherty S.C."/>
            <person name="DeBoy R.T."/>
            <person name="Durkin A.S."/>
            <person name="Gwinn Giglio M."/>
            <person name="Madupu R."/>
            <person name="Nelson W.C."/>
            <person name="Rosovitz M.J."/>
            <person name="Sullivan S.A."/>
            <person name="Crabtree J."/>
            <person name="Creasy T."/>
            <person name="Davidsen T.M."/>
            <person name="Haft D.H."/>
            <person name="Zafar N."/>
            <person name="Zhou L."/>
            <person name="Halpin R."/>
            <person name="Holley T."/>
            <person name="Khouri H.M."/>
            <person name="Feldblyum T.V."/>
            <person name="White O."/>
            <person name="Fraser C.M."/>
            <person name="Chatterjee A.K."/>
            <person name="Cartinhour S."/>
            <person name="Schneider D."/>
            <person name="Mansfield J.W."/>
            <person name="Collmer A."/>
            <person name="Buell R."/>
        </authorList>
    </citation>
    <scope>NUCLEOTIDE SEQUENCE [LARGE SCALE GENOMIC DNA]</scope>
    <source>
        <strain>1448A / Race 6</strain>
    </source>
</reference>
<organism>
    <name type="scientific">Pseudomonas savastanoi pv. phaseolicola (strain 1448A / Race 6)</name>
    <name type="common">Pseudomonas syringae pv. phaseolicola (strain 1448A / Race 6)</name>
    <dbReference type="NCBI Taxonomy" id="264730"/>
    <lineage>
        <taxon>Bacteria</taxon>
        <taxon>Pseudomonadati</taxon>
        <taxon>Pseudomonadota</taxon>
        <taxon>Gammaproteobacteria</taxon>
        <taxon>Pseudomonadales</taxon>
        <taxon>Pseudomonadaceae</taxon>
        <taxon>Pseudomonas</taxon>
    </lineage>
</organism>
<protein>
    <recommendedName>
        <fullName evidence="1">Oligoribonuclease</fullName>
        <ecNumber evidence="1">3.1.15.-</ecNumber>
    </recommendedName>
</protein>
<gene>
    <name evidence="1" type="primary">orn</name>
    <name type="ordered locus">PSPPH_0557</name>
</gene>
<comment type="function">
    <text evidence="1">3'-to-5' exoribonuclease specific for small oligoribonucleotides.</text>
</comment>
<comment type="subcellular location">
    <subcellularLocation>
        <location evidence="1">Cytoplasm</location>
    </subcellularLocation>
</comment>
<comment type="similarity">
    <text evidence="1">Belongs to the oligoribonuclease family.</text>
</comment>